<proteinExistence type="inferred from homology"/>
<accession>B5YFG2</accession>
<keyword id="KW-0067">ATP-binding</keyword>
<keyword id="KW-0963">Cytoplasm</keyword>
<keyword id="KW-0378">Hydrolase</keyword>
<keyword id="KW-0547">Nucleotide-binding</keyword>
<keyword id="KW-0645">Protease</keyword>
<keyword id="KW-0720">Serine protease</keyword>
<keyword id="KW-0346">Stress response</keyword>
<comment type="function">
    <text evidence="1">ATP-dependent serine protease that mediates the selective degradation of mutant and abnormal proteins as well as certain short-lived regulatory proteins. Required for cellular homeostasis and for survival from DNA damage and developmental changes induced by stress. Degrades polypeptides processively to yield small peptide fragments that are 5 to 10 amino acids long. Binds to DNA in a double-stranded, site-specific manner.</text>
</comment>
<comment type="catalytic activity">
    <reaction evidence="1">
        <text>Hydrolysis of proteins in presence of ATP.</text>
        <dbReference type="EC" id="3.4.21.53"/>
    </reaction>
</comment>
<comment type="subunit">
    <text evidence="1">Homohexamer. Organized in a ring with a central cavity.</text>
</comment>
<comment type="subcellular location">
    <subcellularLocation>
        <location evidence="1">Cytoplasm</location>
    </subcellularLocation>
</comment>
<comment type="induction">
    <text evidence="1">By heat shock.</text>
</comment>
<comment type="similarity">
    <text evidence="1">Belongs to the peptidase S16 family.</text>
</comment>
<name>LON_DICT6</name>
<dbReference type="EC" id="3.4.21.53" evidence="1"/>
<dbReference type="EMBL" id="CP001146">
    <property type="protein sequence ID" value="ACI18312.1"/>
    <property type="molecule type" value="Genomic_DNA"/>
</dbReference>
<dbReference type="RefSeq" id="WP_012546944.1">
    <property type="nucleotide sequence ID" value="NC_011297.1"/>
</dbReference>
<dbReference type="SMR" id="B5YFG2"/>
<dbReference type="STRING" id="309799.DICTH_1451"/>
<dbReference type="MEROPS" id="S16.001"/>
<dbReference type="PaxDb" id="309799-DICTH_1451"/>
<dbReference type="KEGG" id="dth:DICTH_1451"/>
<dbReference type="eggNOG" id="COG0466">
    <property type="taxonomic scope" value="Bacteria"/>
</dbReference>
<dbReference type="HOGENOM" id="CLU_004109_4_3_0"/>
<dbReference type="OrthoDB" id="9803599at2"/>
<dbReference type="Proteomes" id="UP000001733">
    <property type="component" value="Chromosome"/>
</dbReference>
<dbReference type="GO" id="GO:0005737">
    <property type="term" value="C:cytoplasm"/>
    <property type="evidence" value="ECO:0007669"/>
    <property type="project" value="UniProtKB-SubCell"/>
</dbReference>
<dbReference type="GO" id="GO:0005524">
    <property type="term" value="F:ATP binding"/>
    <property type="evidence" value="ECO:0007669"/>
    <property type="project" value="UniProtKB-UniRule"/>
</dbReference>
<dbReference type="GO" id="GO:0016887">
    <property type="term" value="F:ATP hydrolysis activity"/>
    <property type="evidence" value="ECO:0007669"/>
    <property type="project" value="UniProtKB-UniRule"/>
</dbReference>
<dbReference type="GO" id="GO:0004176">
    <property type="term" value="F:ATP-dependent peptidase activity"/>
    <property type="evidence" value="ECO:0007669"/>
    <property type="project" value="UniProtKB-UniRule"/>
</dbReference>
<dbReference type="GO" id="GO:0043565">
    <property type="term" value="F:sequence-specific DNA binding"/>
    <property type="evidence" value="ECO:0007669"/>
    <property type="project" value="UniProtKB-UniRule"/>
</dbReference>
<dbReference type="GO" id="GO:0004252">
    <property type="term" value="F:serine-type endopeptidase activity"/>
    <property type="evidence" value="ECO:0007669"/>
    <property type="project" value="UniProtKB-UniRule"/>
</dbReference>
<dbReference type="GO" id="GO:0034605">
    <property type="term" value="P:cellular response to heat"/>
    <property type="evidence" value="ECO:0007669"/>
    <property type="project" value="UniProtKB-UniRule"/>
</dbReference>
<dbReference type="GO" id="GO:0006515">
    <property type="term" value="P:protein quality control for misfolded or incompletely synthesized proteins"/>
    <property type="evidence" value="ECO:0007669"/>
    <property type="project" value="UniProtKB-UniRule"/>
</dbReference>
<dbReference type="CDD" id="cd19500">
    <property type="entry name" value="RecA-like_Lon"/>
    <property type="match status" value="1"/>
</dbReference>
<dbReference type="FunFam" id="1.20.5.5270:FF:000002">
    <property type="entry name" value="Lon protease homolog"/>
    <property type="match status" value="1"/>
</dbReference>
<dbReference type="FunFam" id="3.40.50.300:FF:000382">
    <property type="entry name" value="Lon protease homolog 2, peroxisomal"/>
    <property type="match status" value="1"/>
</dbReference>
<dbReference type="Gene3D" id="1.10.8.60">
    <property type="match status" value="1"/>
</dbReference>
<dbReference type="Gene3D" id="1.20.5.5270">
    <property type="match status" value="1"/>
</dbReference>
<dbReference type="Gene3D" id="1.20.58.1480">
    <property type="match status" value="1"/>
</dbReference>
<dbReference type="Gene3D" id="3.30.230.10">
    <property type="match status" value="1"/>
</dbReference>
<dbReference type="Gene3D" id="2.30.130.40">
    <property type="entry name" value="LON domain-like"/>
    <property type="match status" value="1"/>
</dbReference>
<dbReference type="Gene3D" id="3.40.50.300">
    <property type="entry name" value="P-loop containing nucleotide triphosphate hydrolases"/>
    <property type="match status" value="1"/>
</dbReference>
<dbReference type="HAMAP" id="MF_01973">
    <property type="entry name" value="lon_bact"/>
    <property type="match status" value="1"/>
</dbReference>
<dbReference type="InterPro" id="IPR003593">
    <property type="entry name" value="AAA+_ATPase"/>
</dbReference>
<dbReference type="InterPro" id="IPR003959">
    <property type="entry name" value="ATPase_AAA_core"/>
</dbReference>
<dbReference type="InterPro" id="IPR027543">
    <property type="entry name" value="Lon_bac"/>
</dbReference>
<dbReference type="InterPro" id="IPR004815">
    <property type="entry name" value="Lon_bac/euk-typ"/>
</dbReference>
<dbReference type="InterPro" id="IPR054594">
    <property type="entry name" value="Lon_lid"/>
</dbReference>
<dbReference type="InterPro" id="IPR008269">
    <property type="entry name" value="Lon_proteolytic"/>
</dbReference>
<dbReference type="InterPro" id="IPR027065">
    <property type="entry name" value="Lon_Prtase"/>
</dbReference>
<dbReference type="InterPro" id="IPR003111">
    <property type="entry name" value="Lon_prtase_N"/>
</dbReference>
<dbReference type="InterPro" id="IPR046336">
    <property type="entry name" value="Lon_prtase_N_sf"/>
</dbReference>
<dbReference type="InterPro" id="IPR027417">
    <property type="entry name" value="P-loop_NTPase"/>
</dbReference>
<dbReference type="InterPro" id="IPR008268">
    <property type="entry name" value="Peptidase_S16_AS"/>
</dbReference>
<dbReference type="InterPro" id="IPR015947">
    <property type="entry name" value="PUA-like_sf"/>
</dbReference>
<dbReference type="InterPro" id="IPR020568">
    <property type="entry name" value="Ribosomal_Su5_D2-typ_SF"/>
</dbReference>
<dbReference type="InterPro" id="IPR014721">
    <property type="entry name" value="Ribsml_uS5_D2-typ_fold_subgr"/>
</dbReference>
<dbReference type="NCBIfam" id="TIGR00763">
    <property type="entry name" value="lon"/>
    <property type="match status" value="1"/>
</dbReference>
<dbReference type="NCBIfam" id="NF008053">
    <property type="entry name" value="PRK10787.1"/>
    <property type="match status" value="1"/>
</dbReference>
<dbReference type="PANTHER" id="PTHR10046">
    <property type="entry name" value="ATP DEPENDENT LON PROTEASE FAMILY MEMBER"/>
    <property type="match status" value="1"/>
</dbReference>
<dbReference type="Pfam" id="PF00004">
    <property type="entry name" value="AAA"/>
    <property type="match status" value="1"/>
</dbReference>
<dbReference type="Pfam" id="PF05362">
    <property type="entry name" value="Lon_C"/>
    <property type="match status" value="1"/>
</dbReference>
<dbReference type="Pfam" id="PF22667">
    <property type="entry name" value="Lon_lid"/>
    <property type="match status" value="1"/>
</dbReference>
<dbReference type="Pfam" id="PF02190">
    <property type="entry name" value="LON_substr_bdg"/>
    <property type="match status" value="1"/>
</dbReference>
<dbReference type="PIRSF" id="PIRSF001174">
    <property type="entry name" value="Lon_proteas"/>
    <property type="match status" value="1"/>
</dbReference>
<dbReference type="PRINTS" id="PR00830">
    <property type="entry name" value="ENDOLAPTASE"/>
</dbReference>
<dbReference type="SMART" id="SM00382">
    <property type="entry name" value="AAA"/>
    <property type="match status" value="1"/>
</dbReference>
<dbReference type="SMART" id="SM00464">
    <property type="entry name" value="LON"/>
    <property type="match status" value="1"/>
</dbReference>
<dbReference type="SUPFAM" id="SSF52540">
    <property type="entry name" value="P-loop containing nucleoside triphosphate hydrolases"/>
    <property type="match status" value="1"/>
</dbReference>
<dbReference type="SUPFAM" id="SSF88697">
    <property type="entry name" value="PUA domain-like"/>
    <property type="match status" value="1"/>
</dbReference>
<dbReference type="SUPFAM" id="SSF54211">
    <property type="entry name" value="Ribosomal protein S5 domain 2-like"/>
    <property type="match status" value="1"/>
</dbReference>
<dbReference type="PROSITE" id="PS51787">
    <property type="entry name" value="LON_N"/>
    <property type="match status" value="1"/>
</dbReference>
<dbReference type="PROSITE" id="PS51786">
    <property type="entry name" value="LON_PROTEOLYTIC"/>
    <property type="match status" value="1"/>
</dbReference>
<dbReference type="PROSITE" id="PS01046">
    <property type="entry name" value="LON_SER"/>
    <property type="match status" value="1"/>
</dbReference>
<protein>
    <recommendedName>
        <fullName evidence="1">Lon protease</fullName>
        <ecNumber evidence="1">3.4.21.53</ecNumber>
    </recommendedName>
    <alternativeName>
        <fullName evidence="1">ATP-dependent protease La</fullName>
    </alternativeName>
</protein>
<gene>
    <name evidence="1" type="primary">lon</name>
    <name type="ordered locus">DICTH_1451</name>
</gene>
<sequence>MEERELNQTQDIPEVLPILPLRETVVYPQMLIPLIVGREKSIRLVEDALSGNKLIGMCMQKTPVEDPTPDDIYRIGTVGIIVRSLRFPDNTLRLFVQGLQRIRVIEFLETEPYFKAKVEVIEEKVEKTVEIEGMMRNLLNLFQKMASLIPQFPEELLINAMNIQEPGRLADFIAFNTNLNINEKQEILETIDVKERLQKVTYYLTRELEILEIANKIQNEVKNEIEKSQKEYFLRQQMKAIQKELGEIDPREMEINELRQKLQEAKLPPEAMKEAERELERLSLMPPGSAEYTVTRTYLDWLISLPWAISTEDNLDIKRAEEILNEDHYDLEKVKERILEYLAVRKLKSDMKGPILCFVGPPGVGKTSLGKSIARALGRKFVRISLGGIRDEAEIRGHRRTYVGALPGRIIQGIRKAESNNPVFMLDEIDKLGSDFRGDPAAALLEVLDPEQNNAFVDNYLGVPFDLSKVMFIATANVLYTIPPALLDRMEVIELPGYTEYQKMGIAKGFLIPRQLKEHGLEKEQIEFSDDAIRKIIREYTREAGVRNLEREIASIIRKVAKGIAEGSITEKVIVKVEDVPKYLGPEKYTYGMKGEKDEVGVATGLAWTEAGGDILFVEALVVEGKGNLILTGKLGEVMQESAKTALSYVRSKLKDLNVSYELLEKADIHVHVPSGAIPKDGPSAGVTIATAIASALTRRPVKKDIGMTGEITLRGKVLPVGGIREKVLAAHRAGLTAVIMPKENKKDLEEIPEEVKKEITFYFVEHADEVLNLALLEVKESAEQRNPERIG</sequence>
<evidence type="ECO:0000255" key="1">
    <source>
        <dbReference type="HAMAP-Rule" id="MF_01973"/>
    </source>
</evidence>
<evidence type="ECO:0000255" key="2">
    <source>
        <dbReference type="PROSITE-ProRule" id="PRU01122"/>
    </source>
</evidence>
<evidence type="ECO:0000255" key="3">
    <source>
        <dbReference type="PROSITE-ProRule" id="PRU01123"/>
    </source>
</evidence>
<organism>
    <name type="scientific">Dictyoglomus thermophilum (strain ATCC 35947 / DSM 3960 / H-6-12)</name>
    <dbReference type="NCBI Taxonomy" id="309799"/>
    <lineage>
        <taxon>Bacteria</taxon>
        <taxon>Pseudomonadati</taxon>
        <taxon>Dictyoglomota</taxon>
        <taxon>Dictyoglomia</taxon>
        <taxon>Dictyoglomales</taxon>
        <taxon>Dictyoglomaceae</taxon>
        <taxon>Dictyoglomus</taxon>
    </lineage>
</organism>
<feature type="chain" id="PRO_0000396561" description="Lon protease">
    <location>
        <begin position="1"/>
        <end position="792"/>
    </location>
</feature>
<feature type="domain" description="Lon N-terminal" evidence="3">
    <location>
        <begin position="16"/>
        <end position="208"/>
    </location>
</feature>
<feature type="domain" description="Lon proteolytic" evidence="2">
    <location>
        <begin position="597"/>
        <end position="778"/>
    </location>
</feature>
<feature type="active site" evidence="1">
    <location>
        <position position="684"/>
    </location>
</feature>
<feature type="active site" evidence="1">
    <location>
        <position position="727"/>
    </location>
</feature>
<feature type="binding site" evidence="1">
    <location>
        <begin position="360"/>
        <end position="367"/>
    </location>
    <ligand>
        <name>ATP</name>
        <dbReference type="ChEBI" id="CHEBI:30616"/>
    </ligand>
</feature>
<reference key="1">
    <citation type="journal article" date="2014" name="Genome Announc.">
        <title>Complete Genome Sequence of the Extreme Thermophile Dictyoglomus thermophilum H-6-12.</title>
        <authorList>
            <person name="Coil D.A."/>
            <person name="Badger J.H."/>
            <person name="Forberger H.C."/>
            <person name="Riggs F."/>
            <person name="Madupu R."/>
            <person name="Fedorova N."/>
            <person name="Ward N."/>
            <person name="Robb F.T."/>
            <person name="Eisen J.A."/>
        </authorList>
    </citation>
    <scope>NUCLEOTIDE SEQUENCE [LARGE SCALE GENOMIC DNA]</scope>
    <source>
        <strain>ATCC 35947 / DSM 3960 / H-6-12</strain>
    </source>
</reference>